<name>ARLY_GEOSM</name>
<evidence type="ECO:0000255" key="1">
    <source>
        <dbReference type="HAMAP-Rule" id="MF_00006"/>
    </source>
</evidence>
<accession>C6E6Y9</accession>
<reference key="1">
    <citation type="submission" date="2009-07" db="EMBL/GenBank/DDBJ databases">
        <title>Complete sequence of Geobacter sp. M21.</title>
        <authorList>
            <consortium name="US DOE Joint Genome Institute"/>
            <person name="Lucas S."/>
            <person name="Copeland A."/>
            <person name="Lapidus A."/>
            <person name="Glavina del Rio T."/>
            <person name="Dalin E."/>
            <person name="Tice H."/>
            <person name="Bruce D."/>
            <person name="Goodwin L."/>
            <person name="Pitluck S."/>
            <person name="Saunders E."/>
            <person name="Brettin T."/>
            <person name="Detter J.C."/>
            <person name="Han C."/>
            <person name="Larimer F."/>
            <person name="Land M."/>
            <person name="Hauser L."/>
            <person name="Kyrpides N."/>
            <person name="Ovchinnikova G."/>
            <person name="Lovley D."/>
        </authorList>
    </citation>
    <scope>NUCLEOTIDE SEQUENCE [LARGE SCALE GENOMIC DNA]</scope>
    <source>
        <strain>M21</strain>
    </source>
</reference>
<feature type="chain" id="PRO_1000201700" description="Argininosuccinate lyase">
    <location>
        <begin position="1"/>
        <end position="458"/>
    </location>
</feature>
<sequence length="458" mass="51384">MSKDKLWGGRFTQPTDKFVEEFTASINFDKRLYHQDIRGSIAHATMLGKQGIIPIADVENIVSGLKAILEQIEAGKFDFSVSLEDIHMNIEARLSEKIGDAGKRLHTGRSRNDQVALDIRLYLRDELVEVSAYIDLLIDSIIHQAEENLGVIMPGFTHLQTAQPILFSHHMMAYHEMLKRDKARMEDCLKRTNVLPLGAGALAGTTFPIDREYVAELLDFAEVTRNSLDSVSDRDFAMEFCAASSILMVHLSRFSEELILWSTSEFKFVELSDSFCTGSSIMPQKKNPDVPELVRGKTGRVNGNLVALLTLMKSLPLAYNKDMQEDKEPLFDTIDTVKGCLKVFADMVREMKINPERMEVAAAAGFSTATDVADYLVRKGIPFRDAHEIVGKTVRYCIENEIDIPELSLAEWQLFSGRIEEDIFESITLEASVNARRATGGTALERVRAEIARAKEGR</sequence>
<protein>
    <recommendedName>
        <fullName evidence="1">Argininosuccinate lyase</fullName>
        <shortName evidence="1">ASAL</shortName>
        <ecNumber evidence="1">4.3.2.1</ecNumber>
    </recommendedName>
    <alternativeName>
        <fullName evidence="1">Arginosuccinase</fullName>
    </alternativeName>
</protein>
<gene>
    <name evidence="1" type="primary">argH</name>
    <name type="ordered locus">GM21_3748</name>
</gene>
<keyword id="KW-0028">Amino-acid biosynthesis</keyword>
<keyword id="KW-0055">Arginine biosynthesis</keyword>
<keyword id="KW-0963">Cytoplasm</keyword>
<keyword id="KW-0456">Lyase</keyword>
<organism>
    <name type="scientific">Geobacter sp. (strain M21)</name>
    <dbReference type="NCBI Taxonomy" id="443144"/>
    <lineage>
        <taxon>Bacteria</taxon>
        <taxon>Pseudomonadati</taxon>
        <taxon>Thermodesulfobacteriota</taxon>
        <taxon>Desulfuromonadia</taxon>
        <taxon>Geobacterales</taxon>
        <taxon>Geobacteraceae</taxon>
        <taxon>Geobacter</taxon>
    </lineage>
</organism>
<proteinExistence type="inferred from homology"/>
<comment type="catalytic activity">
    <reaction evidence="1">
        <text>2-(N(omega)-L-arginino)succinate = fumarate + L-arginine</text>
        <dbReference type="Rhea" id="RHEA:24020"/>
        <dbReference type="ChEBI" id="CHEBI:29806"/>
        <dbReference type="ChEBI" id="CHEBI:32682"/>
        <dbReference type="ChEBI" id="CHEBI:57472"/>
        <dbReference type="EC" id="4.3.2.1"/>
    </reaction>
</comment>
<comment type="pathway">
    <text evidence="1">Amino-acid biosynthesis; L-arginine biosynthesis; L-arginine from L-ornithine and carbamoyl phosphate: step 3/3.</text>
</comment>
<comment type="subcellular location">
    <subcellularLocation>
        <location evidence="1">Cytoplasm</location>
    </subcellularLocation>
</comment>
<comment type="similarity">
    <text evidence="1">Belongs to the lyase 1 family. Argininosuccinate lyase subfamily.</text>
</comment>
<dbReference type="EC" id="4.3.2.1" evidence="1"/>
<dbReference type="EMBL" id="CP001661">
    <property type="protein sequence ID" value="ACT19767.1"/>
    <property type="molecule type" value="Genomic_DNA"/>
</dbReference>
<dbReference type="SMR" id="C6E6Y9"/>
<dbReference type="STRING" id="443144.GM21_3748"/>
<dbReference type="KEGG" id="gem:GM21_3748"/>
<dbReference type="eggNOG" id="COG0165">
    <property type="taxonomic scope" value="Bacteria"/>
</dbReference>
<dbReference type="HOGENOM" id="CLU_027272_2_3_7"/>
<dbReference type="OrthoDB" id="9769623at2"/>
<dbReference type="UniPathway" id="UPA00068">
    <property type="reaction ID" value="UER00114"/>
</dbReference>
<dbReference type="GO" id="GO:0005829">
    <property type="term" value="C:cytosol"/>
    <property type="evidence" value="ECO:0007669"/>
    <property type="project" value="TreeGrafter"/>
</dbReference>
<dbReference type="GO" id="GO:0004056">
    <property type="term" value="F:argininosuccinate lyase activity"/>
    <property type="evidence" value="ECO:0007669"/>
    <property type="project" value="UniProtKB-UniRule"/>
</dbReference>
<dbReference type="GO" id="GO:0042450">
    <property type="term" value="P:arginine biosynthetic process via ornithine"/>
    <property type="evidence" value="ECO:0007669"/>
    <property type="project" value="InterPro"/>
</dbReference>
<dbReference type="GO" id="GO:0006526">
    <property type="term" value="P:L-arginine biosynthetic process"/>
    <property type="evidence" value="ECO:0007669"/>
    <property type="project" value="UniProtKB-UniRule"/>
</dbReference>
<dbReference type="CDD" id="cd01359">
    <property type="entry name" value="Argininosuccinate_lyase"/>
    <property type="match status" value="1"/>
</dbReference>
<dbReference type="FunFam" id="1.10.275.10:FF:000002">
    <property type="entry name" value="Argininosuccinate lyase"/>
    <property type="match status" value="1"/>
</dbReference>
<dbReference type="FunFam" id="1.10.40.30:FF:000001">
    <property type="entry name" value="Argininosuccinate lyase"/>
    <property type="match status" value="1"/>
</dbReference>
<dbReference type="FunFam" id="1.20.200.10:FF:000002">
    <property type="entry name" value="Argininosuccinate lyase"/>
    <property type="match status" value="1"/>
</dbReference>
<dbReference type="Gene3D" id="1.10.40.30">
    <property type="entry name" value="Fumarase/aspartase (C-terminal domain)"/>
    <property type="match status" value="1"/>
</dbReference>
<dbReference type="Gene3D" id="1.20.200.10">
    <property type="entry name" value="Fumarase/aspartase (Central domain)"/>
    <property type="match status" value="1"/>
</dbReference>
<dbReference type="Gene3D" id="1.10.275.10">
    <property type="entry name" value="Fumarase/aspartase (N-terminal domain)"/>
    <property type="match status" value="1"/>
</dbReference>
<dbReference type="HAMAP" id="MF_00006">
    <property type="entry name" value="Arg_succ_lyase"/>
    <property type="match status" value="1"/>
</dbReference>
<dbReference type="InterPro" id="IPR029419">
    <property type="entry name" value="Arg_succ_lyase_C"/>
</dbReference>
<dbReference type="InterPro" id="IPR009049">
    <property type="entry name" value="Argininosuccinate_lyase"/>
</dbReference>
<dbReference type="InterPro" id="IPR024083">
    <property type="entry name" value="Fumarase/histidase_N"/>
</dbReference>
<dbReference type="InterPro" id="IPR020557">
    <property type="entry name" value="Fumarate_lyase_CS"/>
</dbReference>
<dbReference type="InterPro" id="IPR000362">
    <property type="entry name" value="Fumarate_lyase_fam"/>
</dbReference>
<dbReference type="InterPro" id="IPR022761">
    <property type="entry name" value="Fumarate_lyase_N"/>
</dbReference>
<dbReference type="InterPro" id="IPR008948">
    <property type="entry name" value="L-Aspartase-like"/>
</dbReference>
<dbReference type="NCBIfam" id="TIGR00838">
    <property type="entry name" value="argH"/>
    <property type="match status" value="1"/>
</dbReference>
<dbReference type="PANTHER" id="PTHR43814">
    <property type="entry name" value="ARGININOSUCCINATE LYASE"/>
    <property type="match status" value="1"/>
</dbReference>
<dbReference type="PANTHER" id="PTHR43814:SF1">
    <property type="entry name" value="ARGININOSUCCINATE LYASE"/>
    <property type="match status" value="1"/>
</dbReference>
<dbReference type="Pfam" id="PF14698">
    <property type="entry name" value="ASL_C2"/>
    <property type="match status" value="1"/>
</dbReference>
<dbReference type="Pfam" id="PF00206">
    <property type="entry name" value="Lyase_1"/>
    <property type="match status" value="1"/>
</dbReference>
<dbReference type="PRINTS" id="PR00145">
    <property type="entry name" value="ARGSUCLYASE"/>
</dbReference>
<dbReference type="PRINTS" id="PR00149">
    <property type="entry name" value="FUMRATELYASE"/>
</dbReference>
<dbReference type="SUPFAM" id="SSF48557">
    <property type="entry name" value="L-aspartase-like"/>
    <property type="match status" value="1"/>
</dbReference>
<dbReference type="PROSITE" id="PS00163">
    <property type="entry name" value="FUMARATE_LYASES"/>
    <property type="match status" value="1"/>
</dbReference>